<reference key="1">
    <citation type="submission" date="2008-06" db="EMBL/GenBank/DDBJ databases">
        <title>Genome and proteome analysis of A. pleuropneumoniae serotype 7.</title>
        <authorList>
            <person name="Linke B."/>
            <person name="Buettner F."/>
            <person name="Martinez-Arias R."/>
            <person name="Goesmann A."/>
            <person name="Baltes N."/>
            <person name="Tegetmeyer H."/>
            <person name="Singh M."/>
            <person name="Gerlach G.F."/>
        </authorList>
    </citation>
    <scope>NUCLEOTIDE SEQUENCE [LARGE SCALE GENOMIC DNA]</scope>
    <source>
        <strain>AP76</strain>
    </source>
</reference>
<accession>B3GY96</accession>
<gene>
    <name evidence="2" type="primary">arcB</name>
    <name type="ordered locus">APP7_1368</name>
</gene>
<name>OTC_ACTP7</name>
<dbReference type="EC" id="2.1.3.3" evidence="2"/>
<dbReference type="EMBL" id="CP001091">
    <property type="protein sequence ID" value="ACE62020.1"/>
    <property type="molecule type" value="Genomic_DNA"/>
</dbReference>
<dbReference type="RefSeq" id="WP_005598400.1">
    <property type="nucleotide sequence ID" value="NC_010939.1"/>
</dbReference>
<dbReference type="SMR" id="B3GY96"/>
<dbReference type="KEGG" id="apa:APP7_1368"/>
<dbReference type="HOGENOM" id="CLU_043846_3_1_6"/>
<dbReference type="UniPathway" id="UPA00254">
    <property type="reaction ID" value="UER00365"/>
</dbReference>
<dbReference type="Proteomes" id="UP000001226">
    <property type="component" value="Chromosome"/>
</dbReference>
<dbReference type="GO" id="GO:0005737">
    <property type="term" value="C:cytoplasm"/>
    <property type="evidence" value="ECO:0007669"/>
    <property type="project" value="UniProtKB-SubCell"/>
</dbReference>
<dbReference type="GO" id="GO:0016597">
    <property type="term" value="F:amino acid binding"/>
    <property type="evidence" value="ECO:0007669"/>
    <property type="project" value="InterPro"/>
</dbReference>
<dbReference type="GO" id="GO:0004585">
    <property type="term" value="F:ornithine carbamoyltransferase activity"/>
    <property type="evidence" value="ECO:0007669"/>
    <property type="project" value="UniProtKB-UniRule"/>
</dbReference>
<dbReference type="GO" id="GO:0042450">
    <property type="term" value="P:arginine biosynthetic process via ornithine"/>
    <property type="evidence" value="ECO:0007669"/>
    <property type="project" value="TreeGrafter"/>
</dbReference>
<dbReference type="GO" id="GO:0019547">
    <property type="term" value="P:arginine catabolic process to ornithine"/>
    <property type="evidence" value="ECO:0007669"/>
    <property type="project" value="UniProtKB-UniRule"/>
</dbReference>
<dbReference type="GO" id="GO:0019240">
    <property type="term" value="P:citrulline biosynthetic process"/>
    <property type="evidence" value="ECO:0007669"/>
    <property type="project" value="TreeGrafter"/>
</dbReference>
<dbReference type="FunFam" id="3.40.50.1370:FF:000003">
    <property type="entry name" value="Ornithine carbamoyltransferase"/>
    <property type="match status" value="1"/>
</dbReference>
<dbReference type="Gene3D" id="3.40.50.1370">
    <property type="entry name" value="Aspartate/ornithine carbamoyltransferase"/>
    <property type="match status" value="2"/>
</dbReference>
<dbReference type="HAMAP" id="MF_01109">
    <property type="entry name" value="OTCase"/>
    <property type="match status" value="1"/>
</dbReference>
<dbReference type="InterPro" id="IPR006132">
    <property type="entry name" value="Asp/Orn_carbamoyltranf_P-bd"/>
</dbReference>
<dbReference type="InterPro" id="IPR006130">
    <property type="entry name" value="Asp/Orn_carbamoylTrfase"/>
</dbReference>
<dbReference type="InterPro" id="IPR036901">
    <property type="entry name" value="Asp/Orn_carbamoylTrfase_sf"/>
</dbReference>
<dbReference type="InterPro" id="IPR006131">
    <property type="entry name" value="Asp_carbamoyltransf_Asp/Orn-bd"/>
</dbReference>
<dbReference type="InterPro" id="IPR002292">
    <property type="entry name" value="Orn/put_carbamltrans"/>
</dbReference>
<dbReference type="InterPro" id="IPR024904">
    <property type="entry name" value="OTCase_ArgI"/>
</dbReference>
<dbReference type="NCBIfam" id="TIGR00658">
    <property type="entry name" value="orni_carb_tr"/>
    <property type="match status" value="1"/>
</dbReference>
<dbReference type="NCBIfam" id="NF001986">
    <property type="entry name" value="PRK00779.1"/>
    <property type="match status" value="1"/>
</dbReference>
<dbReference type="NCBIfam" id="NF002470">
    <property type="entry name" value="PRK01713.1"/>
    <property type="match status" value="1"/>
</dbReference>
<dbReference type="NCBIfam" id="NF003286">
    <property type="entry name" value="PRK04284.1"/>
    <property type="match status" value="1"/>
</dbReference>
<dbReference type="PANTHER" id="PTHR45753:SF2">
    <property type="entry name" value="ORNITHINE CARBAMOYLTRANSFERASE"/>
    <property type="match status" value="1"/>
</dbReference>
<dbReference type="PANTHER" id="PTHR45753">
    <property type="entry name" value="ORNITHINE CARBAMOYLTRANSFERASE, MITOCHONDRIAL"/>
    <property type="match status" value="1"/>
</dbReference>
<dbReference type="Pfam" id="PF00185">
    <property type="entry name" value="OTCace"/>
    <property type="match status" value="1"/>
</dbReference>
<dbReference type="Pfam" id="PF02729">
    <property type="entry name" value="OTCace_N"/>
    <property type="match status" value="1"/>
</dbReference>
<dbReference type="PRINTS" id="PR00100">
    <property type="entry name" value="AOTCASE"/>
</dbReference>
<dbReference type="PRINTS" id="PR00102">
    <property type="entry name" value="OTCASE"/>
</dbReference>
<dbReference type="SUPFAM" id="SSF53671">
    <property type="entry name" value="Aspartate/ornithine carbamoyltransferase"/>
    <property type="match status" value="1"/>
</dbReference>
<dbReference type="PROSITE" id="PS00097">
    <property type="entry name" value="CARBAMOYLTRANSFERASE"/>
    <property type="match status" value="1"/>
</dbReference>
<proteinExistence type="inferred from homology"/>
<organism>
    <name type="scientific">Actinobacillus pleuropneumoniae serotype 7 (strain AP76)</name>
    <dbReference type="NCBI Taxonomy" id="537457"/>
    <lineage>
        <taxon>Bacteria</taxon>
        <taxon>Pseudomonadati</taxon>
        <taxon>Pseudomonadota</taxon>
        <taxon>Gammaproteobacteria</taxon>
        <taxon>Pasteurellales</taxon>
        <taxon>Pasteurellaceae</taxon>
        <taxon>Actinobacillus</taxon>
    </lineage>
</organism>
<evidence type="ECO:0000250" key="1"/>
<evidence type="ECO:0000255" key="2">
    <source>
        <dbReference type="HAMAP-Rule" id="MF_01109"/>
    </source>
</evidence>
<keyword id="KW-0056">Arginine metabolism</keyword>
<keyword id="KW-0963">Cytoplasm</keyword>
<keyword id="KW-0808">Transferase</keyword>
<comment type="function">
    <text evidence="1">Reversibly catalyzes the transfer of the carbamoyl group from carbamoyl phosphate (CP) to the N(epsilon) atom of ornithine (ORN) to produce L-citrulline.</text>
</comment>
<comment type="catalytic activity">
    <reaction evidence="2">
        <text>carbamoyl phosphate + L-ornithine = L-citrulline + phosphate + H(+)</text>
        <dbReference type="Rhea" id="RHEA:19513"/>
        <dbReference type="ChEBI" id="CHEBI:15378"/>
        <dbReference type="ChEBI" id="CHEBI:43474"/>
        <dbReference type="ChEBI" id="CHEBI:46911"/>
        <dbReference type="ChEBI" id="CHEBI:57743"/>
        <dbReference type="ChEBI" id="CHEBI:58228"/>
        <dbReference type="EC" id="2.1.3.3"/>
    </reaction>
</comment>
<comment type="pathway">
    <text evidence="2">Amino-acid degradation; L-arginine degradation via ADI pathway; carbamoyl phosphate from L-arginine: step 2/2.</text>
</comment>
<comment type="subcellular location">
    <subcellularLocation>
        <location evidence="2">Cytoplasm</location>
    </subcellularLocation>
</comment>
<comment type="similarity">
    <text evidence="2">Belongs to the aspartate/ornithine carbamoyltransferase superfamily. OTCase family.</text>
</comment>
<feature type="chain" id="PRO_1000137085" description="Ornithine carbamoyltransferase">
    <location>
        <begin position="1"/>
        <end position="334"/>
    </location>
</feature>
<feature type="binding site" evidence="2">
    <location>
        <begin position="57"/>
        <end position="60"/>
    </location>
    <ligand>
        <name>carbamoyl phosphate</name>
        <dbReference type="ChEBI" id="CHEBI:58228"/>
    </ligand>
</feature>
<feature type="binding site" evidence="2">
    <location>
        <position position="84"/>
    </location>
    <ligand>
        <name>carbamoyl phosphate</name>
        <dbReference type="ChEBI" id="CHEBI:58228"/>
    </ligand>
</feature>
<feature type="binding site" evidence="2">
    <location>
        <position position="108"/>
    </location>
    <ligand>
        <name>carbamoyl phosphate</name>
        <dbReference type="ChEBI" id="CHEBI:58228"/>
    </ligand>
</feature>
<feature type="binding site" evidence="2">
    <location>
        <begin position="135"/>
        <end position="138"/>
    </location>
    <ligand>
        <name>carbamoyl phosphate</name>
        <dbReference type="ChEBI" id="CHEBI:58228"/>
    </ligand>
</feature>
<feature type="binding site" evidence="2">
    <location>
        <position position="168"/>
    </location>
    <ligand>
        <name>L-ornithine</name>
        <dbReference type="ChEBI" id="CHEBI:46911"/>
    </ligand>
</feature>
<feature type="binding site" evidence="2">
    <location>
        <position position="232"/>
    </location>
    <ligand>
        <name>L-ornithine</name>
        <dbReference type="ChEBI" id="CHEBI:46911"/>
    </ligand>
</feature>
<feature type="binding site" evidence="2">
    <location>
        <begin position="236"/>
        <end position="237"/>
    </location>
    <ligand>
        <name>L-ornithine</name>
        <dbReference type="ChEBI" id="CHEBI:46911"/>
    </ligand>
</feature>
<feature type="binding site" evidence="2">
    <location>
        <begin position="274"/>
        <end position="275"/>
    </location>
    <ligand>
        <name>carbamoyl phosphate</name>
        <dbReference type="ChEBI" id="CHEBI:58228"/>
    </ligand>
</feature>
<feature type="binding site" evidence="2">
    <location>
        <position position="321"/>
    </location>
    <ligand>
        <name>carbamoyl phosphate</name>
        <dbReference type="ChEBI" id="CHEBI:58228"/>
    </ligand>
</feature>
<protein>
    <recommendedName>
        <fullName evidence="2">Ornithine carbamoyltransferase</fullName>
        <shortName evidence="2">OTCase</shortName>
        <ecNumber evidence="2">2.1.3.3</ecNumber>
    </recommendedName>
</protein>
<sequence>MAFNLKNRHLLSLVNHTEREIKFLLDLSRDLKRAKYAGTEQQRLKGKNIALIFEKTSTRTRCAFEVAAYDQGAHVTYIDPTSSQIGHKESMKDTARVLGRMYDAIEYRGFKQSVVNELAEYAGVPVFNGLTDEFHPTQMLADVLTMIENCEKPLSQISYVYIGDARNNVGNSLLLIGAKLGMDVRICAPKALLPEDSLVEMCQKFAAESGARITVTDDIDTAVKGVDFVHTDVWVSMGEPLETWGERIDMLMPYQVTPELMKRTGNPKVKFMHCLPAFHNSETKIGKQVAEKYPALANGIEVTEDVFESPANVAFEQAENRMHTIKAVMVASLA</sequence>